<feature type="chain" id="PRO_1000184700" description="ATP synthase subunit delta">
    <location>
        <begin position="1"/>
        <end position="177"/>
    </location>
</feature>
<dbReference type="EMBL" id="CU928162">
    <property type="protein sequence ID" value="CAR10545.2"/>
    <property type="molecule type" value="Genomic_DNA"/>
</dbReference>
<dbReference type="RefSeq" id="WP_001288583.1">
    <property type="nucleotide sequence ID" value="NC_011745.1"/>
</dbReference>
<dbReference type="SMR" id="B7N2H4"/>
<dbReference type="KEGG" id="ecq:ECED1_4425"/>
<dbReference type="HOGENOM" id="CLU_085114_3_0_6"/>
<dbReference type="Proteomes" id="UP000000748">
    <property type="component" value="Chromosome"/>
</dbReference>
<dbReference type="GO" id="GO:0005886">
    <property type="term" value="C:plasma membrane"/>
    <property type="evidence" value="ECO:0007669"/>
    <property type="project" value="UniProtKB-SubCell"/>
</dbReference>
<dbReference type="GO" id="GO:0045259">
    <property type="term" value="C:proton-transporting ATP synthase complex"/>
    <property type="evidence" value="ECO:0007669"/>
    <property type="project" value="UniProtKB-KW"/>
</dbReference>
<dbReference type="GO" id="GO:0046933">
    <property type="term" value="F:proton-transporting ATP synthase activity, rotational mechanism"/>
    <property type="evidence" value="ECO:0007669"/>
    <property type="project" value="UniProtKB-UniRule"/>
</dbReference>
<dbReference type="FunFam" id="1.10.520.20:FF:000001">
    <property type="entry name" value="ATP synthase subunit delta"/>
    <property type="match status" value="1"/>
</dbReference>
<dbReference type="Gene3D" id="1.10.520.20">
    <property type="entry name" value="N-terminal domain of the delta subunit of the F1F0-ATP synthase"/>
    <property type="match status" value="1"/>
</dbReference>
<dbReference type="HAMAP" id="MF_01416">
    <property type="entry name" value="ATP_synth_delta_bact"/>
    <property type="match status" value="1"/>
</dbReference>
<dbReference type="InterPro" id="IPR026015">
    <property type="entry name" value="ATP_synth_OSCP/delta_N_sf"/>
</dbReference>
<dbReference type="InterPro" id="IPR020781">
    <property type="entry name" value="ATPase_OSCP/d_CS"/>
</dbReference>
<dbReference type="InterPro" id="IPR000711">
    <property type="entry name" value="ATPase_OSCP/dsu"/>
</dbReference>
<dbReference type="NCBIfam" id="TIGR01145">
    <property type="entry name" value="ATP_synt_delta"/>
    <property type="match status" value="1"/>
</dbReference>
<dbReference type="NCBIfam" id="NF004402">
    <property type="entry name" value="PRK05758.2-2"/>
    <property type="match status" value="1"/>
</dbReference>
<dbReference type="NCBIfam" id="NF004404">
    <property type="entry name" value="PRK05758.2-5"/>
    <property type="match status" value="1"/>
</dbReference>
<dbReference type="PANTHER" id="PTHR11910">
    <property type="entry name" value="ATP SYNTHASE DELTA CHAIN"/>
    <property type="match status" value="1"/>
</dbReference>
<dbReference type="Pfam" id="PF00213">
    <property type="entry name" value="OSCP"/>
    <property type="match status" value="1"/>
</dbReference>
<dbReference type="PRINTS" id="PR00125">
    <property type="entry name" value="ATPASEDELTA"/>
</dbReference>
<dbReference type="SUPFAM" id="SSF47928">
    <property type="entry name" value="N-terminal domain of the delta subunit of the F1F0-ATP synthase"/>
    <property type="match status" value="1"/>
</dbReference>
<dbReference type="PROSITE" id="PS00389">
    <property type="entry name" value="ATPASE_DELTA"/>
    <property type="match status" value="1"/>
</dbReference>
<reference key="1">
    <citation type="journal article" date="2009" name="PLoS Genet.">
        <title>Organised genome dynamics in the Escherichia coli species results in highly diverse adaptive paths.</title>
        <authorList>
            <person name="Touchon M."/>
            <person name="Hoede C."/>
            <person name="Tenaillon O."/>
            <person name="Barbe V."/>
            <person name="Baeriswyl S."/>
            <person name="Bidet P."/>
            <person name="Bingen E."/>
            <person name="Bonacorsi S."/>
            <person name="Bouchier C."/>
            <person name="Bouvet O."/>
            <person name="Calteau A."/>
            <person name="Chiapello H."/>
            <person name="Clermont O."/>
            <person name="Cruveiller S."/>
            <person name="Danchin A."/>
            <person name="Diard M."/>
            <person name="Dossat C."/>
            <person name="Karoui M.E."/>
            <person name="Frapy E."/>
            <person name="Garry L."/>
            <person name="Ghigo J.M."/>
            <person name="Gilles A.M."/>
            <person name="Johnson J."/>
            <person name="Le Bouguenec C."/>
            <person name="Lescat M."/>
            <person name="Mangenot S."/>
            <person name="Martinez-Jehanne V."/>
            <person name="Matic I."/>
            <person name="Nassif X."/>
            <person name="Oztas S."/>
            <person name="Petit M.A."/>
            <person name="Pichon C."/>
            <person name="Rouy Z."/>
            <person name="Ruf C.S."/>
            <person name="Schneider D."/>
            <person name="Tourret J."/>
            <person name="Vacherie B."/>
            <person name="Vallenet D."/>
            <person name="Medigue C."/>
            <person name="Rocha E.P.C."/>
            <person name="Denamur E."/>
        </authorList>
    </citation>
    <scope>NUCLEOTIDE SEQUENCE [LARGE SCALE GENOMIC DNA]</scope>
    <source>
        <strain>ED1a</strain>
    </source>
</reference>
<comment type="function">
    <text evidence="1">F(1)F(0) ATP synthase produces ATP from ADP in the presence of a proton or sodium gradient. F-type ATPases consist of two structural domains, F(1) containing the extramembraneous catalytic core and F(0) containing the membrane proton channel, linked together by a central stalk and a peripheral stalk. During catalysis, ATP synthesis in the catalytic domain of F(1) is coupled via a rotary mechanism of the central stalk subunits to proton translocation.</text>
</comment>
<comment type="function">
    <text evidence="1">This protein is part of the stalk that links CF(0) to CF(1). It either transmits conformational changes from CF(0) to CF(1) or is implicated in proton conduction.</text>
</comment>
<comment type="subunit">
    <text evidence="1">F-type ATPases have 2 components, F(1) - the catalytic core - and F(0) - the membrane proton channel. F(1) has five subunits: alpha(3), beta(3), gamma(1), delta(1), epsilon(1). F(0) has three main subunits: a(1), b(2) and c(10-14). The alpha and beta chains form an alternating ring which encloses part of the gamma chain. F(1) is attached to F(0) by a central stalk formed by the gamma and epsilon chains, while a peripheral stalk is formed by the delta and b chains.</text>
</comment>
<comment type="subcellular location">
    <subcellularLocation>
        <location evidence="1">Cell inner membrane</location>
        <topology evidence="1">Peripheral membrane protein</topology>
    </subcellularLocation>
</comment>
<comment type="similarity">
    <text evidence="1">Belongs to the ATPase delta chain family.</text>
</comment>
<keyword id="KW-0066">ATP synthesis</keyword>
<keyword id="KW-0997">Cell inner membrane</keyword>
<keyword id="KW-1003">Cell membrane</keyword>
<keyword id="KW-0139">CF(1)</keyword>
<keyword id="KW-0375">Hydrogen ion transport</keyword>
<keyword id="KW-0406">Ion transport</keyword>
<keyword id="KW-0472">Membrane</keyword>
<keyword id="KW-0813">Transport</keyword>
<sequence>MSEFITVARPYAKAAFDFAVEHQSVERWQDMLAFAAEVTKNEQMAELLSGALAPETLAESFIAVCGEQLDENGQNLIRVMAENGRLKALPDVLEQFIHLRAVSEATAEVDVISAAALSEQQLAKISAAMEKRLSRKVKLNCKIDKSVMAGVIIRAGDMVIDGSVRGRLERLADVLQS</sequence>
<name>ATPD_ECO81</name>
<accession>B7N2H4</accession>
<protein>
    <recommendedName>
        <fullName evidence="1">ATP synthase subunit delta</fullName>
    </recommendedName>
    <alternativeName>
        <fullName evidence="1">ATP synthase F(1) sector subunit delta</fullName>
    </alternativeName>
    <alternativeName>
        <fullName evidence="1">F-type ATPase subunit delta</fullName>
        <shortName evidence="1">F-ATPase subunit delta</shortName>
    </alternativeName>
</protein>
<organism>
    <name type="scientific">Escherichia coli O81 (strain ED1a)</name>
    <dbReference type="NCBI Taxonomy" id="585397"/>
    <lineage>
        <taxon>Bacteria</taxon>
        <taxon>Pseudomonadati</taxon>
        <taxon>Pseudomonadota</taxon>
        <taxon>Gammaproteobacteria</taxon>
        <taxon>Enterobacterales</taxon>
        <taxon>Enterobacteriaceae</taxon>
        <taxon>Escherichia</taxon>
    </lineage>
</organism>
<evidence type="ECO:0000255" key="1">
    <source>
        <dbReference type="HAMAP-Rule" id="MF_01416"/>
    </source>
</evidence>
<gene>
    <name evidence="1" type="primary">atpH</name>
    <name type="ordered locus">ECED1_4425</name>
</gene>
<proteinExistence type="inferred from homology"/>